<feature type="chain" id="PRO_0000408349" description="Tudor domain-containing protein 5">
    <location>
        <begin position="1"/>
        <end position="963"/>
    </location>
</feature>
<feature type="domain" description="HTH OST-type 1" evidence="3">
    <location>
        <begin position="6"/>
        <end position="79"/>
    </location>
</feature>
<feature type="domain" description="HTH OST-type 2" evidence="3">
    <location>
        <begin position="122"/>
        <end position="197"/>
    </location>
</feature>
<feature type="domain" description="HTH OST-type 3" evidence="3">
    <location>
        <begin position="375"/>
        <end position="449"/>
    </location>
</feature>
<feature type="domain" description="Tudor" evidence="2">
    <location>
        <begin position="586"/>
        <end position="645"/>
    </location>
</feature>
<feature type="region of interest" description="Disordered" evidence="4">
    <location>
        <begin position="232"/>
        <end position="306"/>
    </location>
</feature>
<feature type="region of interest" description="Disordered" evidence="4">
    <location>
        <begin position="739"/>
        <end position="763"/>
    </location>
</feature>
<feature type="region of interest" description="Disordered" evidence="4">
    <location>
        <begin position="803"/>
        <end position="822"/>
    </location>
</feature>
<feature type="region of interest" description="Disordered" evidence="4">
    <location>
        <begin position="864"/>
        <end position="891"/>
    </location>
</feature>
<feature type="compositionally biased region" description="Polar residues" evidence="4">
    <location>
        <begin position="257"/>
        <end position="276"/>
    </location>
</feature>
<feature type="compositionally biased region" description="Low complexity" evidence="4">
    <location>
        <begin position="751"/>
        <end position="763"/>
    </location>
</feature>
<feature type="compositionally biased region" description="Basic and acidic residues" evidence="4">
    <location>
        <begin position="873"/>
        <end position="887"/>
    </location>
</feature>
<gene>
    <name type="primary">tdrd5</name>
</gene>
<accession>A1L1H3</accession>
<dbReference type="EMBL" id="BC129060">
    <property type="protein sequence ID" value="AAI29061.1"/>
    <property type="molecule type" value="mRNA"/>
</dbReference>
<dbReference type="RefSeq" id="NP_001090599.1">
    <property type="nucleotide sequence ID" value="NM_001097130.1"/>
</dbReference>
<dbReference type="SMR" id="A1L1H3"/>
<dbReference type="DNASU" id="100036842"/>
<dbReference type="GeneID" id="100036842"/>
<dbReference type="KEGG" id="xla:100036842"/>
<dbReference type="AGR" id="Xenbase:XB-GENE-5884063"/>
<dbReference type="CTD" id="100036842"/>
<dbReference type="Xenbase" id="XB-GENE-5884063">
    <property type="gene designation" value="tdrd5.L"/>
</dbReference>
<dbReference type="OrthoDB" id="10052065at2759"/>
<dbReference type="Proteomes" id="UP000186698">
    <property type="component" value="Chromosome 4L"/>
</dbReference>
<dbReference type="Bgee" id="100036842">
    <property type="expression patterns" value="Expressed in testis and 8 other cell types or tissues"/>
</dbReference>
<dbReference type="GO" id="GO:0033391">
    <property type="term" value="C:chromatoid body"/>
    <property type="evidence" value="ECO:0000250"/>
    <property type="project" value="UniProtKB"/>
</dbReference>
<dbReference type="GO" id="GO:0071546">
    <property type="term" value="C:pi-body"/>
    <property type="evidence" value="ECO:0000250"/>
    <property type="project" value="UniProtKB"/>
</dbReference>
<dbReference type="GO" id="GO:0030719">
    <property type="term" value="P:P granule organization"/>
    <property type="evidence" value="ECO:0000250"/>
    <property type="project" value="UniProtKB"/>
</dbReference>
<dbReference type="GO" id="GO:0007286">
    <property type="term" value="P:spermatid development"/>
    <property type="evidence" value="ECO:0000250"/>
    <property type="project" value="UniProtKB"/>
</dbReference>
<dbReference type="GO" id="GO:0141196">
    <property type="term" value="P:transposable element silencing by piRNA-mediated DNA methylation"/>
    <property type="evidence" value="ECO:0000250"/>
    <property type="project" value="UniProtKB"/>
</dbReference>
<dbReference type="CDD" id="cd09975">
    <property type="entry name" value="LOTUS_2_TDRD5"/>
    <property type="match status" value="1"/>
</dbReference>
<dbReference type="CDD" id="cd09976">
    <property type="entry name" value="LOTUS_3_TDRD5"/>
    <property type="match status" value="1"/>
</dbReference>
<dbReference type="CDD" id="cd20419">
    <property type="entry name" value="Tudor_TDRD5"/>
    <property type="match status" value="1"/>
</dbReference>
<dbReference type="FunFam" id="2.30.30.140:FF:000051">
    <property type="entry name" value="Tudor domain-containing protein 5"/>
    <property type="match status" value="1"/>
</dbReference>
<dbReference type="FunFam" id="3.30.420.610:FF:000011">
    <property type="entry name" value="tudor domain-containing protein 5 isoform X3"/>
    <property type="match status" value="1"/>
</dbReference>
<dbReference type="Gene3D" id="2.30.30.140">
    <property type="match status" value="1"/>
</dbReference>
<dbReference type="Gene3D" id="2.40.50.90">
    <property type="match status" value="1"/>
</dbReference>
<dbReference type="Gene3D" id="3.30.420.610">
    <property type="entry name" value="LOTUS domain-like"/>
    <property type="match status" value="3"/>
</dbReference>
<dbReference type="InterPro" id="IPR041966">
    <property type="entry name" value="LOTUS-like"/>
</dbReference>
<dbReference type="InterPro" id="IPR025605">
    <property type="entry name" value="OST-HTH/LOTUS_dom"/>
</dbReference>
<dbReference type="InterPro" id="IPR035437">
    <property type="entry name" value="SNase_OB-fold_sf"/>
</dbReference>
<dbReference type="InterPro" id="IPR037982">
    <property type="entry name" value="TDRD5_LOTUS_2"/>
</dbReference>
<dbReference type="InterPro" id="IPR002999">
    <property type="entry name" value="Tudor"/>
</dbReference>
<dbReference type="InterPro" id="IPR050621">
    <property type="entry name" value="Tudor_domain_containing"/>
</dbReference>
<dbReference type="PANTHER" id="PTHR22948">
    <property type="entry name" value="TUDOR DOMAIN CONTAINING PROTEIN"/>
    <property type="match status" value="1"/>
</dbReference>
<dbReference type="PANTHER" id="PTHR22948:SF19">
    <property type="entry name" value="TUDOR DOMAIN-CONTAINING PROTEIN 5"/>
    <property type="match status" value="1"/>
</dbReference>
<dbReference type="Pfam" id="PF12872">
    <property type="entry name" value="OST-HTH"/>
    <property type="match status" value="3"/>
</dbReference>
<dbReference type="Pfam" id="PF00567">
    <property type="entry name" value="TUDOR"/>
    <property type="match status" value="1"/>
</dbReference>
<dbReference type="SUPFAM" id="SSF63748">
    <property type="entry name" value="Tudor/PWWP/MBT"/>
    <property type="match status" value="1"/>
</dbReference>
<dbReference type="PROSITE" id="PS51644">
    <property type="entry name" value="HTH_OST"/>
    <property type="match status" value="3"/>
</dbReference>
<dbReference type="PROSITE" id="PS50304">
    <property type="entry name" value="TUDOR"/>
    <property type="match status" value="1"/>
</dbReference>
<sequence>MEQERIMQRVQKDVRSLLIASKNGLSIQELEQDYRMMIGSQIPLRSLGYKSTMELLLDMPNVVQIHTQMDGTVNLSAVVDEATRKIADLVSCQKDRSTARSRNRRRNIRPRCPVDLVRRGRVSPVLPATVKSDLRDLLSLSPLLLSELEKAFFSRFGRSFQYTRYGFYSMLEVLRSISDIVEVKQTRTGSLLVLRKSETGHISASLCVKKSLDCQPAAVPNKTSCVFEKCLNEPQRPEKKPSEPATSLKISPPEFQKFSSQEPQSITSSRSFLHSSSNKEPDVNRNVSLGESKKSIENKTSPAVPSNNVVLNNSLVKNSETFESLFTRMSKPVSHVEADHANASEPNSSDLNWLEKKLEKELKLCLARKGAGGSVSDDLRSDIKHVVNQHSNGLNISLLPTAFKSFTGKDLPFKELGFMSVMELVGSLGDILCLESTDEGKDWKLFGAKKEDLVDEFSAGLRSTNSSLSSWNSTRQSTAPLKPVGTIFSKVDEKLWWGPLELKVCSTEQIDIPPDAVRNQKLHCLPRIKHSLMIGVYVESIESPSQFYVRCCGKDTSEKLEDMMIEMRHCYSNECVSERYIVPDNCISVGQIYALRVPGDVWWYRVIVHSIKNSELLDVFYPDFGNVATVKKSWLRFLKNCYMKVPAQAVPSSLPFVTSTEAQWSTQAIKRFRQLCSCLPLVGLVLQYVQDVLVIFLCDTSSAEDVYLHQLLIAQGLAKMEPEHACKKVSRNTFMHYLTPSQEKPQEESSKSSVPSESSQSEVLCTKETILQVIDEVDPEMPYLEAFPTDTDVWDENWVFSDGAGGSNTTPTIPKVETQKQENKISKEQKQPFKFCMDSGDASVVHRPLEEFYISLIKSSKSQESTDIQQSSHTEEQHLAEKSHRCTAEQLQGGSSSSMLCEKKLYYENKDLTYCQQQSKCSFSPLIGFQKLQIPRSATPAALGPAARLATAGRLLYWASDSH</sequence>
<comment type="function">
    <text evidence="1">Required during spermiogenesis to participate in the repression transposable elements and prevent their mobilization, which is essential for the germline integrity. Probably acts via the piRNA metabolic process, which mediates the repression of transposable elements during meiosis by forming complexes composed of piRNAs and Piwi proteins and govern the methylation and subsequent repression of transposons (By similarity).</text>
</comment>
<comment type="subcellular location">
    <subcellularLocation>
        <location evidence="1">Cytoplasm</location>
    </subcellularLocation>
    <text evidence="1">Localizes to chromatoid body (CB) and pi-body (also called intermitochondrial cementin), 2 cytoplasmic ribonucleoprotein granules involved in RNA processing for spermatogenesis.</text>
</comment>
<comment type="similarity">
    <text evidence="5">Belongs to the TDRD5 family.</text>
</comment>
<proteinExistence type="evidence at transcript level"/>
<keyword id="KW-0963">Cytoplasm</keyword>
<keyword id="KW-0217">Developmental protein</keyword>
<keyword id="KW-0221">Differentiation</keyword>
<keyword id="KW-1185">Reference proteome</keyword>
<keyword id="KW-0677">Repeat</keyword>
<keyword id="KW-0744">Spermatogenesis</keyword>
<evidence type="ECO:0000250" key="1"/>
<evidence type="ECO:0000255" key="2">
    <source>
        <dbReference type="PROSITE-ProRule" id="PRU00211"/>
    </source>
</evidence>
<evidence type="ECO:0000255" key="3">
    <source>
        <dbReference type="PROSITE-ProRule" id="PRU00975"/>
    </source>
</evidence>
<evidence type="ECO:0000256" key="4">
    <source>
        <dbReference type="SAM" id="MobiDB-lite"/>
    </source>
</evidence>
<evidence type="ECO:0000305" key="5"/>
<protein>
    <recommendedName>
        <fullName>Tudor domain-containing protein 5</fullName>
    </recommendedName>
</protein>
<organism>
    <name type="scientific">Xenopus laevis</name>
    <name type="common">African clawed frog</name>
    <dbReference type="NCBI Taxonomy" id="8355"/>
    <lineage>
        <taxon>Eukaryota</taxon>
        <taxon>Metazoa</taxon>
        <taxon>Chordata</taxon>
        <taxon>Craniata</taxon>
        <taxon>Vertebrata</taxon>
        <taxon>Euteleostomi</taxon>
        <taxon>Amphibia</taxon>
        <taxon>Batrachia</taxon>
        <taxon>Anura</taxon>
        <taxon>Pipoidea</taxon>
        <taxon>Pipidae</taxon>
        <taxon>Xenopodinae</taxon>
        <taxon>Xenopus</taxon>
        <taxon>Xenopus</taxon>
    </lineage>
</organism>
<reference key="1">
    <citation type="submission" date="2006-12" db="EMBL/GenBank/DDBJ databases">
        <authorList>
            <consortium name="NIH - Xenopus Gene Collection (XGC) project"/>
        </authorList>
    </citation>
    <scope>NUCLEOTIDE SEQUENCE [LARGE SCALE MRNA]</scope>
    <source>
        <tissue>Embryo</tissue>
    </source>
</reference>
<name>TDRD5_XENLA</name>